<organism>
    <name type="scientific">Listeria welshimeri serovar 6b (strain ATCC 35897 / DSM 20650 / CCUG 15529 / CIP 8149 / NCTC 11857 / SLCC 5334 / V8)</name>
    <dbReference type="NCBI Taxonomy" id="386043"/>
    <lineage>
        <taxon>Bacteria</taxon>
        <taxon>Bacillati</taxon>
        <taxon>Bacillota</taxon>
        <taxon>Bacilli</taxon>
        <taxon>Bacillales</taxon>
        <taxon>Listeriaceae</taxon>
        <taxon>Listeria</taxon>
    </lineage>
</organism>
<name>MURC_LISW6</name>
<dbReference type="EC" id="6.3.2.8" evidence="1"/>
<dbReference type="EMBL" id="AM263198">
    <property type="protein sequence ID" value="CAK21039.1"/>
    <property type="molecule type" value="Genomic_DNA"/>
</dbReference>
<dbReference type="RefSeq" id="WP_011702405.1">
    <property type="nucleotide sequence ID" value="NC_008555.1"/>
</dbReference>
<dbReference type="SMR" id="A0AJ57"/>
<dbReference type="STRING" id="386043.lwe1621"/>
<dbReference type="GeneID" id="61189497"/>
<dbReference type="KEGG" id="lwe:lwe1621"/>
<dbReference type="eggNOG" id="COG0773">
    <property type="taxonomic scope" value="Bacteria"/>
</dbReference>
<dbReference type="HOGENOM" id="CLU_028104_1_0_9"/>
<dbReference type="OrthoDB" id="9804126at2"/>
<dbReference type="UniPathway" id="UPA00219"/>
<dbReference type="Proteomes" id="UP000000779">
    <property type="component" value="Chromosome"/>
</dbReference>
<dbReference type="GO" id="GO:0005737">
    <property type="term" value="C:cytoplasm"/>
    <property type="evidence" value="ECO:0007669"/>
    <property type="project" value="UniProtKB-SubCell"/>
</dbReference>
<dbReference type="GO" id="GO:0005524">
    <property type="term" value="F:ATP binding"/>
    <property type="evidence" value="ECO:0007669"/>
    <property type="project" value="UniProtKB-UniRule"/>
</dbReference>
<dbReference type="GO" id="GO:0008763">
    <property type="term" value="F:UDP-N-acetylmuramate-L-alanine ligase activity"/>
    <property type="evidence" value="ECO:0007669"/>
    <property type="project" value="UniProtKB-UniRule"/>
</dbReference>
<dbReference type="GO" id="GO:0051301">
    <property type="term" value="P:cell division"/>
    <property type="evidence" value="ECO:0007669"/>
    <property type="project" value="UniProtKB-KW"/>
</dbReference>
<dbReference type="GO" id="GO:0071555">
    <property type="term" value="P:cell wall organization"/>
    <property type="evidence" value="ECO:0007669"/>
    <property type="project" value="UniProtKB-KW"/>
</dbReference>
<dbReference type="GO" id="GO:0009252">
    <property type="term" value="P:peptidoglycan biosynthetic process"/>
    <property type="evidence" value="ECO:0007669"/>
    <property type="project" value="UniProtKB-UniRule"/>
</dbReference>
<dbReference type="GO" id="GO:0008360">
    <property type="term" value="P:regulation of cell shape"/>
    <property type="evidence" value="ECO:0007669"/>
    <property type="project" value="UniProtKB-KW"/>
</dbReference>
<dbReference type="Gene3D" id="3.90.190.20">
    <property type="entry name" value="Mur ligase, C-terminal domain"/>
    <property type="match status" value="1"/>
</dbReference>
<dbReference type="Gene3D" id="3.40.1190.10">
    <property type="entry name" value="Mur-like, catalytic domain"/>
    <property type="match status" value="1"/>
</dbReference>
<dbReference type="Gene3D" id="3.40.50.720">
    <property type="entry name" value="NAD(P)-binding Rossmann-like Domain"/>
    <property type="match status" value="1"/>
</dbReference>
<dbReference type="HAMAP" id="MF_00046">
    <property type="entry name" value="MurC"/>
    <property type="match status" value="1"/>
</dbReference>
<dbReference type="InterPro" id="IPR036565">
    <property type="entry name" value="Mur-like_cat_sf"/>
</dbReference>
<dbReference type="InterPro" id="IPR004101">
    <property type="entry name" value="Mur_ligase_C"/>
</dbReference>
<dbReference type="InterPro" id="IPR036615">
    <property type="entry name" value="Mur_ligase_C_dom_sf"/>
</dbReference>
<dbReference type="InterPro" id="IPR013221">
    <property type="entry name" value="Mur_ligase_cen"/>
</dbReference>
<dbReference type="InterPro" id="IPR000713">
    <property type="entry name" value="Mur_ligase_N"/>
</dbReference>
<dbReference type="InterPro" id="IPR050061">
    <property type="entry name" value="MurCDEF_pg_biosynth"/>
</dbReference>
<dbReference type="InterPro" id="IPR005758">
    <property type="entry name" value="UDP-N-AcMur_Ala_ligase_MurC"/>
</dbReference>
<dbReference type="NCBIfam" id="TIGR01082">
    <property type="entry name" value="murC"/>
    <property type="match status" value="1"/>
</dbReference>
<dbReference type="PANTHER" id="PTHR43445:SF3">
    <property type="entry name" value="UDP-N-ACETYLMURAMATE--L-ALANINE LIGASE"/>
    <property type="match status" value="1"/>
</dbReference>
<dbReference type="PANTHER" id="PTHR43445">
    <property type="entry name" value="UDP-N-ACETYLMURAMATE--L-ALANINE LIGASE-RELATED"/>
    <property type="match status" value="1"/>
</dbReference>
<dbReference type="Pfam" id="PF01225">
    <property type="entry name" value="Mur_ligase"/>
    <property type="match status" value="1"/>
</dbReference>
<dbReference type="Pfam" id="PF02875">
    <property type="entry name" value="Mur_ligase_C"/>
    <property type="match status" value="1"/>
</dbReference>
<dbReference type="Pfam" id="PF08245">
    <property type="entry name" value="Mur_ligase_M"/>
    <property type="match status" value="1"/>
</dbReference>
<dbReference type="SUPFAM" id="SSF51984">
    <property type="entry name" value="MurCD N-terminal domain"/>
    <property type="match status" value="1"/>
</dbReference>
<dbReference type="SUPFAM" id="SSF53623">
    <property type="entry name" value="MurD-like peptide ligases, catalytic domain"/>
    <property type="match status" value="1"/>
</dbReference>
<dbReference type="SUPFAM" id="SSF53244">
    <property type="entry name" value="MurD-like peptide ligases, peptide-binding domain"/>
    <property type="match status" value="1"/>
</dbReference>
<protein>
    <recommendedName>
        <fullName evidence="1">UDP-N-acetylmuramate--L-alanine ligase</fullName>
        <ecNumber evidence="1">6.3.2.8</ecNumber>
    </recommendedName>
    <alternativeName>
        <fullName evidence="1">UDP-N-acetylmuramoyl-L-alanine synthetase</fullName>
    </alternativeName>
</protein>
<feature type="chain" id="PRO_1000004365" description="UDP-N-acetylmuramate--L-alanine ligase">
    <location>
        <begin position="1"/>
        <end position="447"/>
    </location>
</feature>
<feature type="binding site" evidence="1">
    <location>
        <begin position="108"/>
        <end position="114"/>
    </location>
    <ligand>
        <name>ATP</name>
        <dbReference type="ChEBI" id="CHEBI:30616"/>
    </ligand>
</feature>
<evidence type="ECO:0000255" key="1">
    <source>
        <dbReference type="HAMAP-Rule" id="MF_00046"/>
    </source>
</evidence>
<gene>
    <name evidence="1" type="primary">murC</name>
    <name type="ordered locus">lwe1621</name>
</gene>
<proteinExistence type="inferred from homology"/>
<accession>A0AJ57</accession>
<sequence length="447" mass="50030">MTIYHFVGIKGSGMSALAQILHDKGFQVQGSDVDKYFFTQKALEEKQIPIMTFSADNINEGLTIIAGNAFPDTHEEIERALELGLPVIRYHKFLGQLIDGYTSIAITGSHGKTSTTGLLSHVVGAIRPTSYLIGDGTGSGTKNAQYFALEACEYQRHFLAYKPTYAIMTNIDWDHPDYFKSVDDVFNAFETLGKQVKKAVFALGDDEELRKLSLDIPIIYFGFDEENEFQAKNVIKETTGTRFDVYHRDEFLASFEIPAYGDHNVLNALSVIALCDYEGLPVEAVKKELKTFEGVKRRFSITEKGNQVLVDDYAHHPSEIRATVNAARQKYPDKKVVAVFQPHTFTRTRTFLQGFADSLNLADEVYLCDIFGSAREKTGNLTIADLAHKTKGNHIIKEEHTEELLKYPGAVILFMGAGDVQKFQAAYEKVLDNEVVTKSDFKKSAIN</sequence>
<reference key="1">
    <citation type="journal article" date="2006" name="J. Bacteriol.">
        <title>Whole-genome sequence of Listeria welshimeri reveals common steps in genome reduction with Listeria innocua as compared to Listeria monocytogenes.</title>
        <authorList>
            <person name="Hain T."/>
            <person name="Steinweg C."/>
            <person name="Kuenne C.T."/>
            <person name="Billion A."/>
            <person name="Ghai R."/>
            <person name="Chatterjee S.S."/>
            <person name="Domann E."/>
            <person name="Kaerst U."/>
            <person name="Goesmann A."/>
            <person name="Bekel T."/>
            <person name="Bartels D."/>
            <person name="Kaiser O."/>
            <person name="Meyer F."/>
            <person name="Puehler A."/>
            <person name="Weisshaar B."/>
            <person name="Wehland J."/>
            <person name="Liang C."/>
            <person name="Dandekar T."/>
            <person name="Lampidis R."/>
            <person name="Kreft J."/>
            <person name="Goebel W."/>
            <person name="Chakraborty T."/>
        </authorList>
    </citation>
    <scope>NUCLEOTIDE SEQUENCE [LARGE SCALE GENOMIC DNA]</scope>
    <source>
        <strain>ATCC 35897 / DSM 20650 / CCUG 15529 / CIP 8149 / NCTC 11857 / SLCC 5334 / V8</strain>
    </source>
</reference>
<comment type="function">
    <text evidence="1">Cell wall formation.</text>
</comment>
<comment type="catalytic activity">
    <reaction evidence="1">
        <text>UDP-N-acetyl-alpha-D-muramate + L-alanine + ATP = UDP-N-acetyl-alpha-D-muramoyl-L-alanine + ADP + phosphate + H(+)</text>
        <dbReference type="Rhea" id="RHEA:23372"/>
        <dbReference type="ChEBI" id="CHEBI:15378"/>
        <dbReference type="ChEBI" id="CHEBI:30616"/>
        <dbReference type="ChEBI" id="CHEBI:43474"/>
        <dbReference type="ChEBI" id="CHEBI:57972"/>
        <dbReference type="ChEBI" id="CHEBI:70757"/>
        <dbReference type="ChEBI" id="CHEBI:83898"/>
        <dbReference type="ChEBI" id="CHEBI:456216"/>
        <dbReference type="EC" id="6.3.2.8"/>
    </reaction>
</comment>
<comment type="pathway">
    <text evidence="1">Cell wall biogenesis; peptidoglycan biosynthesis.</text>
</comment>
<comment type="subcellular location">
    <subcellularLocation>
        <location evidence="1">Cytoplasm</location>
    </subcellularLocation>
</comment>
<comment type="similarity">
    <text evidence="1">Belongs to the MurCDEF family.</text>
</comment>
<keyword id="KW-0067">ATP-binding</keyword>
<keyword id="KW-0131">Cell cycle</keyword>
<keyword id="KW-0132">Cell division</keyword>
<keyword id="KW-0133">Cell shape</keyword>
<keyword id="KW-0961">Cell wall biogenesis/degradation</keyword>
<keyword id="KW-0963">Cytoplasm</keyword>
<keyword id="KW-0436">Ligase</keyword>
<keyword id="KW-0547">Nucleotide-binding</keyword>
<keyword id="KW-0573">Peptidoglycan synthesis</keyword>